<reference key="1">
    <citation type="journal article" date="2004" name="Nucleic Acids Res.">
        <title>Unique features revealed by the genome sequence of Acinetobacter sp. ADP1, a versatile and naturally transformation competent bacterium.</title>
        <authorList>
            <person name="Barbe V."/>
            <person name="Vallenet D."/>
            <person name="Fonknechten N."/>
            <person name="Kreimeyer A."/>
            <person name="Oztas S."/>
            <person name="Labarre L."/>
            <person name="Cruveiller S."/>
            <person name="Robert C."/>
            <person name="Duprat S."/>
            <person name="Wincker P."/>
            <person name="Ornston L.N."/>
            <person name="Weissenbach J."/>
            <person name="Marliere P."/>
            <person name="Cohen G.N."/>
            <person name="Medigue C."/>
        </authorList>
    </citation>
    <scope>NUCLEOTIDE SEQUENCE [LARGE SCALE GENOMIC DNA]</scope>
    <source>
        <strain>ATCC 33305 / BD413 / ADP1</strain>
    </source>
</reference>
<dbReference type="EC" id="2.1.1.45" evidence="1"/>
<dbReference type="EMBL" id="CR543861">
    <property type="protein sequence ID" value="CAG67441.1"/>
    <property type="molecule type" value="Genomic_DNA"/>
</dbReference>
<dbReference type="RefSeq" id="WP_004920124.1">
    <property type="nucleotide sequence ID" value="NC_005966.1"/>
</dbReference>
<dbReference type="SMR" id="Q6FER7"/>
<dbReference type="STRING" id="202950.GCA_001485005_00754"/>
<dbReference type="GeneID" id="45232995"/>
<dbReference type="KEGG" id="aci:ACIAD0515"/>
<dbReference type="eggNOG" id="COG0207">
    <property type="taxonomic scope" value="Bacteria"/>
</dbReference>
<dbReference type="HOGENOM" id="CLU_021669_0_0_6"/>
<dbReference type="OrthoDB" id="9774633at2"/>
<dbReference type="BioCyc" id="ASP62977:ACIAD_RS02335-MONOMER"/>
<dbReference type="UniPathway" id="UPA00575"/>
<dbReference type="Proteomes" id="UP000000430">
    <property type="component" value="Chromosome"/>
</dbReference>
<dbReference type="GO" id="GO:0005829">
    <property type="term" value="C:cytosol"/>
    <property type="evidence" value="ECO:0007669"/>
    <property type="project" value="TreeGrafter"/>
</dbReference>
<dbReference type="GO" id="GO:0004799">
    <property type="term" value="F:thymidylate synthase activity"/>
    <property type="evidence" value="ECO:0007669"/>
    <property type="project" value="UniProtKB-UniRule"/>
</dbReference>
<dbReference type="GO" id="GO:0006231">
    <property type="term" value="P:dTMP biosynthetic process"/>
    <property type="evidence" value="ECO:0007669"/>
    <property type="project" value="UniProtKB-UniRule"/>
</dbReference>
<dbReference type="GO" id="GO:0006235">
    <property type="term" value="P:dTTP biosynthetic process"/>
    <property type="evidence" value="ECO:0007669"/>
    <property type="project" value="UniProtKB-UniRule"/>
</dbReference>
<dbReference type="GO" id="GO:0032259">
    <property type="term" value="P:methylation"/>
    <property type="evidence" value="ECO:0007669"/>
    <property type="project" value="UniProtKB-KW"/>
</dbReference>
<dbReference type="CDD" id="cd00351">
    <property type="entry name" value="TS_Pyrimidine_HMase"/>
    <property type="match status" value="1"/>
</dbReference>
<dbReference type="FunFam" id="3.30.572.10:FF:000013">
    <property type="entry name" value="Thymidylate synthase"/>
    <property type="match status" value="1"/>
</dbReference>
<dbReference type="Gene3D" id="3.30.572.10">
    <property type="entry name" value="Thymidylate synthase/dCMP hydroxymethylase domain"/>
    <property type="match status" value="1"/>
</dbReference>
<dbReference type="HAMAP" id="MF_00008">
    <property type="entry name" value="Thymidy_synth_bact"/>
    <property type="match status" value="1"/>
</dbReference>
<dbReference type="InterPro" id="IPR045097">
    <property type="entry name" value="Thymidate_synth/dCMP_Mease"/>
</dbReference>
<dbReference type="InterPro" id="IPR023451">
    <property type="entry name" value="Thymidate_synth/dCMP_Mease_dom"/>
</dbReference>
<dbReference type="InterPro" id="IPR036926">
    <property type="entry name" value="Thymidate_synth/dCMP_Mease_sf"/>
</dbReference>
<dbReference type="InterPro" id="IPR000398">
    <property type="entry name" value="Thymidylate_synthase"/>
</dbReference>
<dbReference type="InterPro" id="IPR020940">
    <property type="entry name" value="Thymidylate_synthase_AS"/>
</dbReference>
<dbReference type="NCBIfam" id="NF002497">
    <property type="entry name" value="PRK01827.1-3"/>
    <property type="match status" value="1"/>
</dbReference>
<dbReference type="NCBIfam" id="NF002499">
    <property type="entry name" value="PRK01827.1-5"/>
    <property type="match status" value="1"/>
</dbReference>
<dbReference type="NCBIfam" id="TIGR03284">
    <property type="entry name" value="thym_sym"/>
    <property type="match status" value="1"/>
</dbReference>
<dbReference type="PANTHER" id="PTHR11548:SF9">
    <property type="entry name" value="THYMIDYLATE SYNTHASE"/>
    <property type="match status" value="1"/>
</dbReference>
<dbReference type="PANTHER" id="PTHR11548">
    <property type="entry name" value="THYMIDYLATE SYNTHASE 1"/>
    <property type="match status" value="1"/>
</dbReference>
<dbReference type="Pfam" id="PF00303">
    <property type="entry name" value="Thymidylat_synt"/>
    <property type="match status" value="1"/>
</dbReference>
<dbReference type="PRINTS" id="PR00108">
    <property type="entry name" value="THYMDSNTHASE"/>
</dbReference>
<dbReference type="SUPFAM" id="SSF55831">
    <property type="entry name" value="Thymidylate synthase/dCMP hydroxymethylase"/>
    <property type="match status" value="1"/>
</dbReference>
<dbReference type="PROSITE" id="PS00091">
    <property type="entry name" value="THYMIDYLATE_SYNTHASE"/>
    <property type="match status" value="1"/>
</dbReference>
<feature type="chain" id="PRO_0000140913" description="Thymidylate synthase">
    <location>
        <begin position="1"/>
        <end position="280"/>
    </location>
</feature>
<feature type="active site" description="Nucleophile" evidence="1">
    <location>
        <position position="162"/>
    </location>
</feature>
<feature type="binding site" description="in other chain" evidence="1">
    <location>
        <position position="21"/>
    </location>
    <ligand>
        <name>dUMP</name>
        <dbReference type="ChEBI" id="CHEBI:246422"/>
        <note>ligand shared between dimeric partners</note>
    </ligand>
</feature>
<feature type="binding site" evidence="1">
    <location>
        <position position="51"/>
    </location>
    <ligand>
        <name>(6R)-5,10-methylene-5,6,7,8-tetrahydrofolate</name>
        <dbReference type="ChEBI" id="CHEBI:15636"/>
    </ligand>
</feature>
<feature type="binding site" evidence="1">
    <location>
        <begin position="142"/>
        <end position="143"/>
    </location>
    <ligand>
        <name>dUMP</name>
        <dbReference type="ChEBI" id="CHEBI:246422"/>
        <note>ligand shared between dimeric partners</note>
    </ligand>
</feature>
<feature type="binding site" description="in other chain" evidence="1">
    <location>
        <begin position="182"/>
        <end position="185"/>
    </location>
    <ligand>
        <name>dUMP</name>
        <dbReference type="ChEBI" id="CHEBI:246422"/>
        <note>ligand shared between dimeric partners</note>
    </ligand>
</feature>
<feature type="binding site" evidence="1">
    <location>
        <position position="185"/>
    </location>
    <ligand>
        <name>(6R)-5,10-methylene-5,6,7,8-tetrahydrofolate</name>
        <dbReference type="ChEBI" id="CHEBI:15636"/>
    </ligand>
</feature>
<feature type="binding site" description="in other chain" evidence="1">
    <location>
        <position position="193"/>
    </location>
    <ligand>
        <name>dUMP</name>
        <dbReference type="ChEBI" id="CHEBI:246422"/>
        <note>ligand shared between dimeric partners</note>
    </ligand>
</feature>
<feature type="binding site" description="in other chain" evidence="1">
    <location>
        <begin position="223"/>
        <end position="225"/>
    </location>
    <ligand>
        <name>dUMP</name>
        <dbReference type="ChEBI" id="CHEBI:246422"/>
        <note>ligand shared between dimeric partners</note>
    </ligand>
</feature>
<feature type="binding site" evidence="1">
    <location>
        <position position="279"/>
    </location>
    <ligand>
        <name>(6R)-5,10-methylene-5,6,7,8-tetrahydrofolate</name>
        <dbReference type="ChEBI" id="CHEBI:15636"/>
    </ligand>
</feature>
<proteinExistence type="inferred from homology"/>
<comment type="function">
    <text evidence="1">Catalyzes the reductive methylation of 2'-deoxyuridine-5'-monophosphate (dUMP) to 2'-deoxythymidine-5'-monophosphate (dTMP) while utilizing 5,10-methylenetetrahydrofolate (mTHF) as the methyl donor and reductant in the reaction, yielding dihydrofolate (DHF) as a by-product. This enzymatic reaction provides an intracellular de novo source of dTMP, an essential precursor for DNA biosynthesis.</text>
</comment>
<comment type="catalytic activity">
    <reaction evidence="1">
        <text>dUMP + (6R)-5,10-methylene-5,6,7,8-tetrahydrofolate = 7,8-dihydrofolate + dTMP</text>
        <dbReference type="Rhea" id="RHEA:12104"/>
        <dbReference type="ChEBI" id="CHEBI:15636"/>
        <dbReference type="ChEBI" id="CHEBI:57451"/>
        <dbReference type="ChEBI" id="CHEBI:63528"/>
        <dbReference type="ChEBI" id="CHEBI:246422"/>
        <dbReference type="EC" id="2.1.1.45"/>
    </reaction>
</comment>
<comment type="pathway">
    <text evidence="1">Pyrimidine metabolism; dTTP biosynthesis.</text>
</comment>
<comment type="subunit">
    <text evidence="1">Homodimer.</text>
</comment>
<comment type="subcellular location">
    <subcellularLocation>
        <location evidence="1">Cytoplasm</location>
    </subcellularLocation>
</comment>
<comment type="similarity">
    <text evidence="1">Belongs to the thymidylate synthase family. Bacterial-type ThyA subfamily.</text>
</comment>
<organism>
    <name type="scientific">Acinetobacter baylyi (strain ATCC 33305 / BD413 / ADP1)</name>
    <dbReference type="NCBI Taxonomy" id="62977"/>
    <lineage>
        <taxon>Bacteria</taxon>
        <taxon>Pseudomonadati</taxon>
        <taxon>Pseudomonadota</taxon>
        <taxon>Gammaproteobacteria</taxon>
        <taxon>Moraxellales</taxon>
        <taxon>Moraxellaceae</taxon>
        <taxon>Acinetobacter</taxon>
    </lineage>
</organism>
<name>TYSY_ACIAD</name>
<gene>
    <name evidence="1" type="primary">thyA</name>
    <name type="ordered locus">ACIAD0515</name>
</gene>
<sequence>MRTYLDLLQHILDNGGDKGDRTGTGTRSVFGHQMRFDLSQGFPLLTTKKVHFRSIVIELLWFLKGDTNVQYLKDHKVSIWDEWATAEQTARFGRPEGELGPVYGHQWRNFGATQNSDGSYKNDGFDQIKWLINEIKTNPNSRRLIVSGWNPNEAGQVALPPCHTLFQFFVQDGKLSCQLYQRSADVFLGVPFNIASYALLTHMIAQVCGLGVGDFVWTGGDTHLYANHFEQAQLQLTREPLPLCQLKLNPEITDLFDFKFEDIEIVDYQSHPAIKAPVAV</sequence>
<keyword id="KW-0963">Cytoplasm</keyword>
<keyword id="KW-0489">Methyltransferase</keyword>
<keyword id="KW-0545">Nucleotide biosynthesis</keyword>
<keyword id="KW-0808">Transferase</keyword>
<protein>
    <recommendedName>
        <fullName evidence="1">Thymidylate synthase</fullName>
        <shortName evidence="1">TS</shortName>
        <shortName evidence="1">TSase</shortName>
        <ecNumber evidence="1">2.1.1.45</ecNumber>
    </recommendedName>
</protein>
<evidence type="ECO:0000255" key="1">
    <source>
        <dbReference type="HAMAP-Rule" id="MF_00008"/>
    </source>
</evidence>
<accession>Q6FER7</accession>